<protein>
    <recommendedName>
        <fullName evidence="3">Cupiennin-3d</fullName>
        <shortName evidence="3">Cu-3d</shortName>
    </recommendedName>
    <alternativeName>
        <fullName evidence="2">Short cationic peptide-3d</fullName>
        <shortName evidence="2">SCP-3d</shortName>
    </alternativeName>
</protein>
<comment type="subcellular location">
    <subcellularLocation>
        <location evidence="1">Secreted</location>
    </subcellularLocation>
</comment>
<comment type="tissue specificity">
    <text evidence="5">Expressed by the venom gland.</text>
</comment>
<comment type="mass spectrometry"/>
<comment type="similarity">
    <text evidence="4">Belongs to the cationic peptide 04 (cupiennin) family. 03 subfamily.</text>
</comment>
<evidence type="ECO:0000269" key="1">
    <source>
    </source>
</evidence>
<evidence type="ECO:0000303" key="2">
    <source>
    </source>
</evidence>
<evidence type="ECO:0000303" key="3">
    <source ref="2"/>
</evidence>
<evidence type="ECO:0000305" key="4"/>
<evidence type="ECO:0000305" key="5">
    <source>
    </source>
</evidence>
<dbReference type="GO" id="GO:0005576">
    <property type="term" value="C:extracellular region"/>
    <property type="evidence" value="ECO:0007669"/>
    <property type="project" value="UniProtKB-SubCell"/>
</dbReference>
<dbReference type="GO" id="GO:0090729">
    <property type="term" value="F:toxin activity"/>
    <property type="evidence" value="ECO:0007669"/>
    <property type="project" value="UniProtKB-KW"/>
</dbReference>
<dbReference type="GO" id="GO:0042742">
    <property type="term" value="P:defense response to bacterium"/>
    <property type="evidence" value="ECO:0007669"/>
    <property type="project" value="InterPro"/>
</dbReference>
<dbReference type="InterPro" id="IPR035164">
    <property type="entry name" value="Cupiennin"/>
</dbReference>
<dbReference type="Pfam" id="PF17563">
    <property type="entry name" value="Cu"/>
    <property type="match status" value="1"/>
</dbReference>
<feature type="peptide" id="PRO_0000421211" description="Cupiennin-3d" evidence="1">
    <location>
        <begin position="1"/>
        <end position="27"/>
    </location>
</feature>
<feature type="modified residue" description="Glutamic acid 1-amide" evidence="1">
    <location>
        <position position="27"/>
    </location>
</feature>
<reference key="1">
    <citation type="journal article" date="2012" name="FEBS J.">
        <title>Multicomponent venom of the spider Cupiennius salei: a bioanalytical investigation applying different strategies.</title>
        <authorList>
            <person name="Trachsel C."/>
            <person name="Siegemund D."/>
            <person name="Kampfer U."/>
            <person name="Kopp L.S."/>
            <person name="Buhr C."/>
            <person name="Grossmann J."/>
            <person name="Luthi C."/>
            <person name="Cunningham M."/>
            <person name="Nentwig W."/>
            <person name="Kuhn-Nentwig L."/>
            <person name="Schurch S."/>
            <person name="Schaller J."/>
        </authorList>
    </citation>
    <scope>PROTEIN SEQUENCE</scope>
    <scope>MASS SPECTROMETRY</scope>
    <scope>AMIDATION AT GLU-27</scope>
    <source>
        <tissue>Venom</tissue>
    </source>
</reference>
<reference key="2">
    <citation type="unpublished observations" date="2015-06">
        <authorList>
            <person name="Kuhn-Nentwig L."/>
            <person name="Gohel T."/>
        </authorList>
    </citation>
    <scope>NOMENCLATURE</scope>
</reference>
<keyword id="KW-0027">Amidation</keyword>
<keyword id="KW-0903">Direct protein sequencing</keyword>
<keyword id="KW-0964">Secreted</keyword>
<keyword id="KW-0800">Toxin</keyword>
<proteinExistence type="evidence at protein level"/>
<name>TXC3D_CUPSA</name>
<organism>
    <name type="scientific">Cupiennius salei</name>
    <name type="common">American wandering spider</name>
    <dbReference type="NCBI Taxonomy" id="6928"/>
    <lineage>
        <taxon>Eukaryota</taxon>
        <taxon>Metazoa</taxon>
        <taxon>Ecdysozoa</taxon>
        <taxon>Arthropoda</taxon>
        <taxon>Chelicerata</taxon>
        <taxon>Arachnida</taxon>
        <taxon>Araneae</taxon>
        <taxon>Araneomorphae</taxon>
        <taxon>Entelegynae</taxon>
        <taxon>Lycosoidea</taxon>
        <taxon>Ctenidae</taxon>
        <taxon>Cupiennius</taxon>
    </lineage>
</organism>
<sequence>GFGALFKFLAKKVAKTVAKQVAKKQME</sequence>
<accession>B3EWV4</accession>